<geneLocation type="mitochondrion"/>
<protein>
    <recommendedName>
        <fullName>NADH-ubiquinone oxidoreductase chain 6</fullName>
        <ecNumber evidence="1">7.1.1.2</ecNumber>
    </recommendedName>
    <alternativeName>
        <fullName>NADH dehydrogenase subunit 6</fullName>
    </alternativeName>
</protein>
<feature type="chain" id="PRO_0000269898" description="NADH-ubiquinone oxidoreductase chain 6">
    <location>
        <begin position="1"/>
        <end position="175"/>
    </location>
</feature>
<feature type="transmembrane region" description="Helical" evidence="3">
    <location>
        <begin position="1"/>
        <end position="21"/>
    </location>
</feature>
<feature type="transmembrane region" description="Helical" evidence="3">
    <location>
        <begin position="25"/>
        <end position="45"/>
    </location>
</feature>
<feature type="transmembrane region" description="Helical" evidence="3">
    <location>
        <begin position="47"/>
        <end position="67"/>
    </location>
</feature>
<feature type="transmembrane region" description="Helical" evidence="3">
    <location>
        <begin position="88"/>
        <end position="108"/>
    </location>
</feature>
<feature type="transmembrane region" description="Helical" evidence="3">
    <location>
        <begin position="149"/>
        <end position="169"/>
    </location>
</feature>
<feature type="sequence variant" evidence="4">
    <original>L</original>
    <variation>F</variation>
    <location>
        <position position="31"/>
    </location>
</feature>
<dbReference type="EC" id="7.1.1.2" evidence="1"/>
<dbReference type="EMBL" id="DQ480503">
    <property type="protein sequence ID" value="ABE48166.1"/>
    <property type="molecule type" value="Genomic_DNA"/>
</dbReference>
<dbReference type="EMBL" id="DQ480504">
    <property type="protein sequence ID" value="ABE48179.1"/>
    <property type="molecule type" value="Genomic_DNA"/>
</dbReference>
<dbReference type="EMBL" id="DQ480505">
    <property type="protein sequence ID" value="ABE48192.1"/>
    <property type="molecule type" value="Genomic_DNA"/>
</dbReference>
<dbReference type="EMBL" id="DQ480506">
    <property type="protein sequence ID" value="ABE48205.1"/>
    <property type="molecule type" value="Genomic_DNA"/>
</dbReference>
<dbReference type="EMBL" id="DQ480507">
    <property type="protein sequence ID" value="ABE48218.1"/>
    <property type="molecule type" value="Genomic_DNA"/>
</dbReference>
<dbReference type="EMBL" id="DQ480508">
    <property type="protein sequence ID" value="ABE48231.1"/>
    <property type="molecule type" value="Genomic_DNA"/>
</dbReference>
<dbReference type="RefSeq" id="YP_626739.1">
    <property type="nucleotide sequence ID" value="NC_008092.1"/>
</dbReference>
<dbReference type="SMR" id="Q1HK79"/>
<dbReference type="GeneID" id="4097762"/>
<dbReference type="CTD" id="4541"/>
<dbReference type="GO" id="GO:0005743">
    <property type="term" value="C:mitochondrial inner membrane"/>
    <property type="evidence" value="ECO:0000250"/>
    <property type="project" value="UniProtKB"/>
</dbReference>
<dbReference type="GO" id="GO:0008137">
    <property type="term" value="F:NADH dehydrogenase (ubiquinone) activity"/>
    <property type="evidence" value="ECO:0000250"/>
    <property type="project" value="UniProtKB"/>
</dbReference>
<dbReference type="GO" id="GO:0006120">
    <property type="term" value="P:mitochondrial electron transport, NADH to ubiquinone"/>
    <property type="evidence" value="ECO:0000250"/>
    <property type="project" value="UniProtKB"/>
</dbReference>
<dbReference type="GO" id="GO:0032981">
    <property type="term" value="P:mitochondrial respiratory chain complex I assembly"/>
    <property type="evidence" value="ECO:0000250"/>
    <property type="project" value="UniProtKB"/>
</dbReference>
<dbReference type="Gene3D" id="1.20.120.1200">
    <property type="entry name" value="NADH-ubiquinone/plastoquinone oxidoreductase chain 6, subunit NuoJ"/>
    <property type="match status" value="1"/>
</dbReference>
<dbReference type="InterPro" id="IPR050269">
    <property type="entry name" value="ComplexI_Subunit6"/>
</dbReference>
<dbReference type="InterPro" id="IPR001457">
    <property type="entry name" value="NADH_UbQ/plastoQ_OxRdtase_su6"/>
</dbReference>
<dbReference type="InterPro" id="IPR042106">
    <property type="entry name" value="Nuo/plastoQ_OxRdtase_6_NuoJ"/>
</dbReference>
<dbReference type="PANTHER" id="PTHR11435">
    <property type="entry name" value="NADH UBIQUINONE OXIDOREDUCTASE SUBUNIT ND6"/>
    <property type="match status" value="1"/>
</dbReference>
<dbReference type="PANTHER" id="PTHR11435:SF1">
    <property type="entry name" value="NADH-UBIQUINONE OXIDOREDUCTASE CHAIN 6"/>
    <property type="match status" value="1"/>
</dbReference>
<dbReference type="Pfam" id="PF00499">
    <property type="entry name" value="Oxidored_q3"/>
    <property type="match status" value="1"/>
</dbReference>
<organism>
    <name type="scientific">Canis lupus</name>
    <name type="common">Gray wolf</name>
    <dbReference type="NCBI Taxonomy" id="9612"/>
    <lineage>
        <taxon>Eukaryota</taxon>
        <taxon>Metazoa</taxon>
        <taxon>Chordata</taxon>
        <taxon>Craniata</taxon>
        <taxon>Vertebrata</taxon>
        <taxon>Euteleostomi</taxon>
        <taxon>Mammalia</taxon>
        <taxon>Eutheria</taxon>
        <taxon>Laurasiatheria</taxon>
        <taxon>Carnivora</taxon>
        <taxon>Caniformia</taxon>
        <taxon>Canidae</taxon>
        <taxon>Canis</taxon>
    </lineage>
</organism>
<name>NU6M_CANLU</name>
<comment type="function">
    <text evidence="1">Core subunit of the mitochondrial membrane respiratory chain NADH dehydrogenase (Complex I) which catalyzes electron transfer from NADH through the respiratory chain, using ubiquinone as an electron acceptor. Essential for the catalytic activity and assembly of complex I.</text>
</comment>
<comment type="catalytic activity">
    <reaction evidence="1">
        <text>a ubiquinone + NADH + 5 H(+)(in) = a ubiquinol + NAD(+) + 4 H(+)(out)</text>
        <dbReference type="Rhea" id="RHEA:29091"/>
        <dbReference type="Rhea" id="RHEA-COMP:9565"/>
        <dbReference type="Rhea" id="RHEA-COMP:9566"/>
        <dbReference type="ChEBI" id="CHEBI:15378"/>
        <dbReference type="ChEBI" id="CHEBI:16389"/>
        <dbReference type="ChEBI" id="CHEBI:17976"/>
        <dbReference type="ChEBI" id="CHEBI:57540"/>
        <dbReference type="ChEBI" id="CHEBI:57945"/>
        <dbReference type="EC" id="7.1.1.2"/>
    </reaction>
</comment>
<comment type="subunit">
    <text evidence="2">Core subunit of respiratory chain NADH dehydrogenase (Complex I) which is composed of 45 different subunits.</text>
</comment>
<comment type="subcellular location">
    <subcellularLocation>
        <location evidence="2">Mitochondrion inner membrane</location>
        <topology evidence="3">Multi-pass membrane protein</topology>
    </subcellularLocation>
</comment>
<comment type="similarity">
    <text evidence="5">Belongs to the complex I subunit 6 family.</text>
</comment>
<reference key="1">
    <citation type="journal article" date="2006" name="Genome Res.">
        <title>Relaxation of selective constraint on dog mitochondrial DNA following domestication.</title>
        <authorList>
            <person name="Bjornerfeldt S."/>
            <person name="Webster M.T."/>
            <person name="Vila C."/>
        </authorList>
    </citation>
    <scope>NUCLEOTIDE SEQUENCE [GENOMIC DNA]</scope>
    <scope>VARIANT PHE-31</scope>
</reference>
<keyword id="KW-0249">Electron transport</keyword>
<keyword id="KW-0472">Membrane</keyword>
<keyword id="KW-0496">Mitochondrion</keyword>
<keyword id="KW-0999">Mitochondrion inner membrane</keyword>
<keyword id="KW-0520">NAD</keyword>
<keyword id="KW-0679">Respiratory chain</keyword>
<keyword id="KW-1278">Translocase</keyword>
<keyword id="KW-0812">Transmembrane</keyword>
<keyword id="KW-1133">Transmembrane helix</keyword>
<keyword id="KW-0813">Transport</keyword>
<keyword id="KW-0830">Ubiquinone</keyword>
<sequence>MMTYIVFILSIVFVMSFVGFATKPSPIYGGLVLIISGGIGCAIVLNFGGSFLGLMVFLIYLGGMLVVFGYTTAMATEQYPEVWVSNKAVLAAFITGLLSELLTACYILKDDEVEVVLKFNGMGDWVIYDTGDSGFFSEEAMGIAALYSYGTWLVVVTGWSLLIGVLVIMEVTRGN</sequence>
<accession>Q1HK79</accession>
<accession>Q1HKE4</accession>
<proteinExistence type="inferred from homology"/>
<evidence type="ECO:0000250" key="1">
    <source>
        <dbReference type="UniProtKB" id="P03923"/>
    </source>
</evidence>
<evidence type="ECO:0000250" key="2">
    <source>
        <dbReference type="UniProtKB" id="P03924"/>
    </source>
</evidence>
<evidence type="ECO:0000255" key="3"/>
<evidence type="ECO:0000269" key="4">
    <source>
    </source>
</evidence>
<evidence type="ECO:0000305" key="5"/>
<gene>
    <name type="primary">MT-ND6</name>
    <name type="synonym">MTND6</name>
    <name type="synonym">NADH6</name>
    <name type="synonym">ND6</name>
</gene>